<organism>
    <name type="scientific">Yersinia pestis</name>
    <dbReference type="NCBI Taxonomy" id="632"/>
    <lineage>
        <taxon>Bacteria</taxon>
        <taxon>Pseudomonadati</taxon>
        <taxon>Pseudomonadota</taxon>
        <taxon>Gammaproteobacteria</taxon>
        <taxon>Enterobacterales</taxon>
        <taxon>Yersiniaceae</taxon>
        <taxon>Yersinia</taxon>
    </lineage>
</organism>
<reference key="1">
    <citation type="journal article" date="2001" name="Nature">
        <title>Genome sequence of Yersinia pestis, the causative agent of plague.</title>
        <authorList>
            <person name="Parkhill J."/>
            <person name="Wren B.W."/>
            <person name="Thomson N.R."/>
            <person name="Titball R.W."/>
            <person name="Holden M.T.G."/>
            <person name="Prentice M.B."/>
            <person name="Sebaihia M."/>
            <person name="James K.D."/>
            <person name="Churcher C.M."/>
            <person name="Mungall K.L."/>
            <person name="Baker S."/>
            <person name="Basham D."/>
            <person name="Bentley S.D."/>
            <person name="Brooks K."/>
            <person name="Cerdeno-Tarraga A.-M."/>
            <person name="Chillingworth T."/>
            <person name="Cronin A."/>
            <person name="Davies R.M."/>
            <person name="Davis P."/>
            <person name="Dougan G."/>
            <person name="Feltwell T."/>
            <person name="Hamlin N."/>
            <person name="Holroyd S."/>
            <person name="Jagels K."/>
            <person name="Karlyshev A.V."/>
            <person name="Leather S."/>
            <person name="Moule S."/>
            <person name="Oyston P.C.F."/>
            <person name="Quail M.A."/>
            <person name="Rutherford K.M."/>
            <person name="Simmonds M."/>
            <person name="Skelton J."/>
            <person name="Stevens K."/>
            <person name="Whitehead S."/>
            <person name="Barrell B.G."/>
        </authorList>
    </citation>
    <scope>NUCLEOTIDE SEQUENCE [LARGE SCALE GENOMIC DNA]</scope>
    <source>
        <strain>CO-92 / Biovar Orientalis</strain>
    </source>
</reference>
<reference key="2">
    <citation type="journal article" date="2002" name="J. Bacteriol.">
        <title>Genome sequence of Yersinia pestis KIM.</title>
        <authorList>
            <person name="Deng W."/>
            <person name="Burland V."/>
            <person name="Plunkett G. III"/>
            <person name="Boutin A."/>
            <person name="Mayhew G.F."/>
            <person name="Liss P."/>
            <person name="Perna N.T."/>
            <person name="Rose D.J."/>
            <person name="Mau B."/>
            <person name="Zhou S."/>
            <person name="Schwartz D.C."/>
            <person name="Fetherston J.D."/>
            <person name="Lindler L.E."/>
            <person name="Brubaker R.R."/>
            <person name="Plano G.V."/>
            <person name="Straley S.C."/>
            <person name="McDonough K.A."/>
            <person name="Nilles M.L."/>
            <person name="Matson J.S."/>
            <person name="Blattner F.R."/>
            <person name="Perry R.D."/>
        </authorList>
    </citation>
    <scope>NUCLEOTIDE SEQUENCE [LARGE SCALE GENOMIC DNA]</scope>
    <source>
        <strain>KIM10+ / Biovar Mediaevalis</strain>
    </source>
</reference>
<reference key="3">
    <citation type="journal article" date="2004" name="DNA Res.">
        <title>Complete genome sequence of Yersinia pestis strain 91001, an isolate avirulent to humans.</title>
        <authorList>
            <person name="Song Y."/>
            <person name="Tong Z."/>
            <person name="Wang J."/>
            <person name="Wang L."/>
            <person name="Guo Z."/>
            <person name="Han Y."/>
            <person name="Zhang J."/>
            <person name="Pei D."/>
            <person name="Zhou D."/>
            <person name="Qin H."/>
            <person name="Pang X."/>
            <person name="Han Y."/>
            <person name="Zhai J."/>
            <person name="Li M."/>
            <person name="Cui B."/>
            <person name="Qi Z."/>
            <person name="Jin L."/>
            <person name="Dai R."/>
            <person name="Chen F."/>
            <person name="Li S."/>
            <person name="Ye C."/>
            <person name="Du Z."/>
            <person name="Lin W."/>
            <person name="Wang J."/>
            <person name="Yu J."/>
            <person name="Yang H."/>
            <person name="Wang J."/>
            <person name="Huang P."/>
            <person name="Yang R."/>
        </authorList>
    </citation>
    <scope>NUCLEOTIDE SEQUENCE [LARGE SCALE GENOMIC DNA]</scope>
    <source>
        <strain>91001 / Biovar Mediaevalis</strain>
    </source>
</reference>
<keyword id="KW-0997">Cell inner membrane</keyword>
<keyword id="KW-1003">Cell membrane</keyword>
<keyword id="KW-0472">Membrane</keyword>
<keyword id="KW-1185">Reference proteome</keyword>
<keyword id="KW-0812">Transmembrane</keyword>
<keyword id="KW-1133">Transmembrane helix</keyword>
<comment type="subcellular location">
    <subcellularLocation>
        <location evidence="1">Cell inner membrane</location>
        <topology evidence="1">Multi-pass membrane protein</topology>
    </subcellularLocation>
</comment>
<comment type="similarity">
    <text evidence="1">Belongs to the UPF0259 family.</text>
</comment>
<accession>Q8ZEH4</accession>
<accession>Q0WEW8</accession>
<proteinExistence type="inferred from homology"/>
<dbReference type="EMBL" id="AL590842">
    <property type="protein sequence ID" value="CAL20828.1"/>
    <property type="molecule type" value="Genomic_DNA"/>
</dbReference>
<dbReference type="EMBL" id="AE009952">
    <property type="protein sequence ID" value="AAM85607.1"/>
    <property type="molecule type" value="Genomic_DNA"/>
</dbReference>
<dbReference type="EMBL" id="AE017042">
    <property type="protein sequence ID" value="AAS62213.1"/>
    <property type="molecule type" value="Genomic_DNA"/>
</dbReference>
<dbReference type="PIR" id="AI0267">
    <property type="entry name" value="AI0267"/>
</dbReference>
<dbReference type="RefSeq" id="WP_002210639.1">
    <property type="nucleotide sequence ID" value="NZ_WUCL01000001.1"/>
</dbReference>
<dbReference type="RefSeq" id="YP_002347170.1">
    <property type="nucleotide sequence ID" value="NC_003143.1"/>
</dbReference>
<dbReference type="STRING" id="214092.YPO2199"/>
<dbReference type="PaxDb" id="214092-YPO2199"/>
<dbReference type="DNASU" id="1146989"/>
<dbReference type="EnsemblBacteria" id="AAS62213">
    <property type="protein sequence ID" value="AAS62213"/>
    <property type="gene ID" value="YP_1997"/>
</dbReference>
<dbReference type="KEGG" id="ype:YPO2199"/>
<dbReference type="KEGG" id="ypk:y2042"/>
<dbReference type="KEGG" id="ypm:YP_1997"/>
<dbReference type="PATRIC" id="fig|214092.21.peg.2595"/>
<dbReference type="eggNOG" id="ENOG502Z96Y">
    <property type="taxonomic scope" value="Bacteria"/>
</dbReference>
<dbReference type="HOGENOM" id="CLU_073287_0_0_6"/>
<dbReference type="OMA" id="PGLWLMV"/>
<dbReference type="OrthoDB" id="6454524at2"/>
<dbReference type="Proteomes" id="UP000000815">
    <property type="component" value="Chromosome"/>
</dbReference>
<dbReference type="Proteomes" id="UP000001019">
    <property type="component" value="Chromosome"/>
</dbReference>
<dbReference type="Proteomes" id="UP000002490">
    <property type="component" value="Chromosome"/>
</dbReference>
<dbReference type="GO" id="GO:0005886">
    <property type="term" value="C:plasma membrane"/>
    <property type="evidence" value="ECO:0007669"/>
    <property type="project" value="UniProtKB-SubCell"/>
</dbReference>
<dbReference type="HAMAP" id="MF_01067">
    <property type="entry name" value="UPF0259"/>
    <property type="match status" value="1"/>
</dbReference>
<dbReference type="InterPro" id="IPR009627">
    <property type="entry name" value="UPF0259"/>
</dbReference>
<dbReference type="NCBIfam" id="NF002774">
    <property type="entry name" value="PRK02868.1"/>
    <property type="match status" value="1"/>
</dbReference>
<dbReference type="Pfam" id="PF06790">
    <property type="entry name" value="UPF0259"/>
    <property type="match status" value="1"/>
</dbReference>
<gene>
    <name type="ordered locus">YPO2199</name>
    <name type="ordered locus">y2042</name>
    <name type="ordered locus">YP_1997</name>
</gene>
<protein>
    <recommendedName>
        <fullName evidence="1">UPF0259 membrane protein YPO2199/y2042/YP_1997</fullName>
    </recommendedName>
</protein>
<name>Y2199_YERPE</name>
<evidence type="ECO:0000255" key="1">
    <source>
        <dbReference type="HAMAP-Rule" id="MF_01067"/>
    </source>
</evidence>
<feature type="chain" id="PRO_0000206522" description="UPF0259 membrane protein YPO2199/y2042/YP_1997">
    <location>
        <begin position="1"/>
        <end position="256"/>
    </location>
</feature>
<feature type="transmembrane region" description="Helical" evidence="1">
    <location>
        <begin position="20"/>
        <end position="40"/>
    </location>
</feature>
<feature type="transmembrane region" description="Helical" evidence="1">
    <location>
        <begin position="90"/>
        <end position="110"/>
    </location>
</feature>
<feature type="transmembrane region" description="Helical" evidence="1">
    <location>
        <begin position="118"/>
        <end position="138"/>
    </location>
</feature>
<feature type="transmembrane region" description="Helical" evidence="1">
    <location>
        <begin position="141"/>
        <end position="161"/>
    </location>
</feature>
<feature type="transmembrane region" description="Helical" evidence="1">
    <location>
        <begin position="192"/>
        <end position="212"/>
    </location>
</feature>
<feature type="transmembrane region" description="Helical" evidence="1">
    <location>
        <begin position="221"/>
        <end position="241"/>
    </location>
</feature>
<sequence>MPITANTLYRDSFNFLRNQIAAILLLALLTAFITVMLNQTFMPASEQLSILSIPENDITSSGNLSISEIVSQMTPEQQMVLLRVSAVATFSALVGNVLLVGGLLTLIAMVSQGRRVSALQAIGLSLPILPRLLVLMFISTLVIQLGLTFFIVPGVAIAIALSLSPIIVTNERMGIFAAMKASAQLAFANVRLIVPAMMLWIAVKLLLLFLISRFTVLPPTIATIVLSTLSNLASALLLVYLFRLYMLLRPVSLDKQ</sequence>